<gene>
    <name evidence="1" type="primary">clpS</name>
    <name type="ordered locus">UTI89_C0887</name>
</gene>
<reference key="1">
    <citation type="journal article" date="2006" name="Proc. Natl. Acad. Sci. U.S.A.">
        <title>Identification of genes subject to positive selection in uropathogenic strains of Escherichia coli: a comparative genomics approach.</title>
        <authorList>
            <person name="Chen S.L."/>
            <person name="Hung C.-S."/>
            <person name="Xu J."/>
            <person name="Reigstad C.S."/>
            <person name="Magrini V."/>
            <person name="Sabo A."/>
            <person name="Blasiar D."/>
            <person name="Bieri T."/>
            <person name="Meyer R.R."/>
            <person name="Ozersky P."/>
            <person name="Armstrong J.R."/>
            <person name="Fulton R.S."/>
            <person name="Latreille J.P."/>
            <person name="Spieth J."/>
            <person name="Hooton T.M."/>
            <person name="Mardis E.R."/>
            <person name="Hultgren S.J."/>
            <person name="Gordon J.I."/>
        </authorList>
    </citation>
    <scope>NUCLEOTIDE SEQUENCE [LARGE SCALE GENOMIC DNA]</scope>
    <source>
        <strain>UTI89 / UPEC</strain>
    </source>
</reference>
<feature type="chain" id="PRO_0000300704" description="ATP-dependent Clp protease adapter protein ClpS">
    <location>
        <begin position="1"/>
        <end position="106"/>
    </location>
</feature>
<evidence type="ECO:0000255" key="1">
    <source>
        <dbReference type="HAMAP-Rule" id="MF_00302"/>
    </source>
</evidence>
<comment type="function">
    <text evidence="1">Involved in the modulation of the specificity of the ClpAP-mediated ATP-dependent protein degradation.</text>
</comment>
<comment type="subunit">
    <text evidence="1">Binds to the N-terminal domain of the chaperone ClpA.</text>
</comment>
<comment type="similarity">
    <text evidence="1">Belongs to the ClpS family.</text>
</comment>
<accession>Q1RE41</accession>
<dbReference type="EMBL" id="CP000243">
    <property type="protein sequence ID" value="ABE06373.1"/>
    <property type="molecule type" value="Genomic_DNA"/>
</dbReference>
<dbReference type="RefSeq" id="WP_000520781.1">
    <property type="nucleotide sequence ID" value="NZ_CP064825.1"/>
</dbReference>
<dbReference type="SMR" id="Q1RE41"/>
<dbReference type="GeneID" id="86863397"/>
<dbReference type="KEGG" id="eci:UTI89_C0887"/>
<dbReference type="HOGENOM" id="CLU_134358_2_1_6"/>
<dbReference type="Proteomes" id="UP000001952">
    <property type="component" value="Chromosome"/>
</dbReference>
<dbReference type="GO" id="GO:0030163">
    <property type="term" value="P:protein catabolic process"/>
    <property type="evidence" value="ECO:0007669"/>
    <property type="project" value="InterPro"/>
</dbReference>
<dbReference type="GO" id="GO:0006508">
    <property type="term" value="P:proteolysis"/>
    <property type="evidence" value="ECO:0007669"/>
    <property type="project" value="UniProtKB-UniRule"/>
</dbReference>
<dbReference type="FunFam" id="3.30.1390.10:FF:000002">
    <property type="entry name" value="ATP-dependent Clp protease adapter protein ClpS"/>
    <property type="match status" value="1"/>
</dbReference>
<dbReference type="Gene3D" id="3.30.1390.10">
    <property type="match status" value="1"/>
</dbReference>
<dbReference type="HAMAP" id="MF_00302">
    <property type="entry name" value="ClpS"/>
    <property type="match status" value="1"/>
</dbReference>
<dbReference type="InterPro" id="IPR022935">
    <property type="entry name" value="ClpS"/>
</dbReference>
<dbReference type="InterPro" id="IPR003769">
    <property type="entry name" value="ClpS_core"/>
</dbReference>
<dbReference type="InterPro" id="IPR014719">
    <property type="entry name" value="Ribosomal_bL12_C/ClpS-like"/>
</dbReference>
<dbReference type="NCBIfam" id="NF000670">
    <property type="entry name" value="PRK00033.1-3"/>
    <property type="match status" value="1"/>
</dbReference>
<dbReference type="NCBIfam" id="NF000672">
    <property type="entry name" value="PRK00033.1-5"/>
    <property type="match status" value="1"/>
</dbReference>
<dbReference type="PANTHER" id="PTHR33473:SF19">
    <property type="entry name" value="ATP-DEPENDENT CLP PROTEASE ADAPTER PROTEIN CLPS"/>
    <property type="match status" value="1"/>
</dbReference>
<dbReference type="PANTHER" id="PTHR33473">
    <property type="entry name" value="ATP-DEPENDENT CLP PROTEASE ADAPTER PROTEIN CLPS1, CHLOROPLASTIC"/>
    <property type="match status" value="1"/>
</dbReference>
<dbReference type="Pfam" id="PF02617">
    <property type="entry name" value="ClpS"/>
    <property type="match status" value="1"/>
</dbReference>
<dbReference type="SUPFAM" id="SSF54736">
    <property type="entry name" value="ClpS-like"/>
    <property type="match status" value="1"/>
</dbReference>
<name>CLPS_ECOUT</name>
<organism>
    <name type="scientific">Escherichia coli (strain UTI89 / UPEC)</name>
    <dbReference type="NCBI Taxonomy" id="364106"/>
    <lineage>
        <taxon>Bacteria</taxon>
        <taxon>Pseudomonadati</taxon>
        <taxon>Pseudomonadota</taxon>
        <taxon>Gammaproteobacteria</taxon>
        <taxon>Enterobacterales</taxon>
        <taxon>Enterobacteriaceae</taxon>
        <taxon>Escherichia</taxon>
    </lineage>
</organism>
<sequence>MGKTNDWLDFDQLAEEKVRDALKPPSMYKVILVNDDYTPMEFVIDVLQKFFSYDVERATQLMLAVHYQGKAICGVFTAEVAETKVAMVNKYARENEHPLLCTLEKA</sequence>
<protein>
    <recommendedName>
        <fullName evidence="1">ATP-dependent Clp protease adapter protein ClpS</fullName>
    </recommendedName>
</protein>
<proteinExistence type="inferred from homology"/>